<dbReference type="EC" id="2.3.1.-"/>
<dbReference type="EMBL" id="AAFI02000167">
    <property type="protein sequence ID" value="EAL62084.1"/>
    <property type="molecule type" value="Genomic_DNA"/>
</dbReference>
<dbReference type="RefSeq" id="XP_635588.1">
    <property type="nucleotide sequence ID" value="XM_630496.1"/>
</dbReference>
<dbReference type="SMR" id="Q54FQ3"/>
<dbReference type="FunCoup" id="Q54FQ3">
    <property type="interactions" value="4"/>
</dbReference>
<dbReference type="STRING" id="44689.Q54FQ3"/>
<dbReference type="PaxDb" id="44689-DDB0235262"/>
<dbReference type="EnsemblProtists" id="EAL62084">
    <property type="protein sequence ID" value="EAL62084"/>
    <property type="gene ID" value="DDB_G0290699"/>
</dbReference>
<dbReference type="GeneID" id="8627785"/>
<dbReference type="KEGG" id="ddi:DDB_G0290699"/>
<dbReference type="dictyBase" id="DDB_G0290699">
    <property type="gene designation" value="pks29"/>
</dbReference>
<dbReference type="VEuPathDB" id="AmoebaDB:DDB_G0290699"/>
<dbReference type="eggNOG" id="KOG1178">
    <property type="taxonomic scope" value="Eukaryota"/>
</dbReference>
<dbReference type="eggNOG" id="KOG1202">
    <property type="taxonomic scope" value="Eukaryota"/>
</dbReference>
<dbReference type="HOGENOM" id="CLU_000022_31_5_1"/>
<dbReference type="InParanoid" id="Q54FQ3"/>
<dbReference type="OMA" id="QWWEFSI"/>
<dbReference type="PhylomeDB" id="Q54FQ3"/>
<dbReference type="PRO" id="PR:Q54FQ3"/>
<dbReference type="Proteomes" id="UP000002195">
    <property type="component" value="Chromosome 5"/>
</dbReference>
<dbReference type="GO" id="GO:0004315">
    <property type="term" value="F:3-oxoacyl-[acyl-carrier-protein] synthase activity"/>
    <property type="evidence" value="ECO:0007669"/>
    <property type="project" value="InterPro"/>
</dbReference>
<dbReference type="GO" id="GO:0016491">
    <property type="term" value="F:oxidoreductase activity"/>
    <property type="evidence" value="ECO:0007669"/>
    <property type="project" value="InterPro"/>
</dbReference>
<dbReference type="GO" id="GO:0006633">
    <property type="term" value="P:fatty acid biosynthetic process"/>
    <property type="evidence" value="ECO:0000318"/>
    <property type="project" value="GO_Central"/>
</dbReference>
<dbReference type="CDD" id="cd02440">
    <property type="entry name" value="AdoMet_MTases"/>
    <property type="match status" value="1"/>
</dbReference>
<dbReference type="CDD" id="cd05195">
    <property type="entry name" value="enoyl_red"/>
    <property type="match status" value="1"/>
</dbReference>
<dbReference type="CDD" id="cd08954">
    <property type="entry name" value="KR_1_FAS_SDR_x"/>
    <property type="match status" value="1"/>
</dbReference>
<dbReference type="CDD" id="cd00833">
    <property type="entry name" value="PKS"/>
    <property type="match status" value="1"/>
</dbReference>
<dbReference type="CDD" id="cd05235">
    <property type="entry name" value="SDR_e1"/>
    <property type="match status" value="1"/>
</dbReference>
<dbReference type="FunFam" id="3.10.129.110:FF:000009">
    <property type="entry name" value="Probable polyketide synthase 2"/>
    <property type="match status" value="1"/>
</dbReference>
<dbReference type="FunFam" id="3.40.366.10:FF:000002">
    <property type="entry name" value="Probable polyketide synthase 2"/>
    <property type="match status" value="1"/>
</dbReference>
<dbReference type="FunFam" id="3.40.47.10:FF:000091">
    <property type="entry name" value="Probable polyketide synthase 32"/>
    <property type="match status" value="1"/>
</dbReference>
<dbReference type="FunFam" id="3.40.50.720:FF:000794">
    <property type="entry name" value="Probable polyketide synthase 33"/>
    <property type="match status" value="1"/>
</dbReference>
<dbReference type="Gene3D" id="3.40.47.10">
    <property type="match status" value="1"/>
</dbReference>
<dbReference type="Gene3D" id="1.10.1200.10">
    <property type="entry name" value="ACP-like"/>
    <property type="match status" value="1"/>
</dbReference>
<dbReference type="Gene3D" id="3.40.366.10">
    <property type="entry name" value="Malonyl-Coenzyme A Acyl Carrier Protein, domain 2"/>
    <property type="match status" value="1"/>
</dbReference>
<dbReference type="Gene3D" id="3.90.180.10">
    <property type="entry name" value="Medium-chain alcohol dehydrogenases, catalytic domain"/>
    <property type="match status" value="1"/>
</dbReference>
<dbReference type="Gene3D" id="3.40.50.720">
    <property type="entry name" value="NAD(P)-binding Rossmann-like Domain"/>
    <property type="match status" value="3"/>
</dbReference>
<dbReference type="Gene3D" id="3.10.129.110">
    <property type="entry name" value="Polyketide synthase dehydratase"/>
    <property type="match status" value="1"/>
</dbReference>
<dbReference type="Gene3D" id="3.40.50.150">
    <property type="entry name" value="Vaccinia Virus protein VP39"/>
    <property type="match status" value="1"/>
</dbReference>
<dbReference type="InterPro" id="IPR001227">
    <property type="entry name" value="Ac_transferase_dom_sf"/>
</dbReference>
<dbReference type="InterPro" id="IPR036736">
    <property type="entry name" value="ACP-like_sf"/>
</dbReference>
<dbReference type="InterPro" id="IPR014043">
    <property type="entry name" value="Acyl_transferase_dom"/>
</dbReference>
<dbReference type="InterPro" id="IPR016035">
    <property type="entry name" value="Acyl_Trfase/lysoPLipase"/>
</dbReference>
<dbReference type="InterPro" id="IPR013154">
    <property type="entry name" value="ADH-like_N"/>
</dbReference>
<dbReference type="InterPro" id="IPR013120">
    <property type="entry name" value="Far_NAD-bd"/>
</dbReference>
<dbReference type="InterPro" id="IPR011032">
    <property type="entry name" value="GroES-like_sf"/>
</dbReference>
<dbReference type="InterPro" id="IPR018201">
    <property type="entry name" value="Ketoacyl_synth_AS"/>
</dbReference>
<dbReference type="InterPro" id="IPR014031">
    <property type="entry name" value="Ketoacyl_synth_C"/>
</dbReference>
<dbReference type="InterPro" id="IPR014030">
    <property type="entry name" value="Ketoacyl_synth_N"/>
</dbReference>
<dbReference type="InterPro" id="IPR016036">
    <property type="entry name" value="Malonyl_transacylase_ACP-bd"/>
</dbReference>
<dbReference type="InterPro" id="IPR013217">
    <property type="entry name" value="Methyltransf_12"/>
</dbReference>
<dbReference type="InterPro" id="IPR036291">
    <property type="entry name" value="NAD(P)-bd_dom_sf"/>
</dbReference>
<dbReference type="InterPro" id="IPR032821">
    <property type="entry name" value="PKS_assoc"/>
</dbReference>
<dbReference type="InterPro" id="IPR020841">
    <property type="entry name" value="PKS_Beta-ketoAc_synthase_dom"/>
</dbReference>
<dbReference type="InterPro" id="IPR042104">
    <property type="entry name" value="PKS_dehydratase_sf"/>
</dbReference>
<dbReference type="InterPro" id="IPR020843">
    <property type="entry name" value="PKS_ER"/>
</dbReference>
<dbReference type="InterPro" id="IPR013968">
    <property type="entry name" value="PKS_KR"/>
</dbReference>
<dbReference type="InterPro" id="IPR049900">
    <property type="entry name" value="PKS_mFAS_DH"/>
</dbReference>
<dbReference type="InterPro" id="IPR050444">
    <property type="entry name" value="Polyketide_Synthase"/>
</dbReference>
<dbReference type="InterPro" id="IPR009081">
    <property type="entry name" value="PP-bd_ACP"/>
</dbReference>
<dbReference type="InterPro" id="IPR029063">
    <property type="entry name" value="SAM-dependent_MTases_sf"/>
</dbReference>
<dbReference type="InterPro" id="IPR010080">
    <property type="entry name" value="Thioester_reductase-like_dom"/>
</dbReference>
<dbReference type="InterPro" id="IPR016039">
    <property type="entry name" value="Thiolase-like"/>
</dbReference>
<dbReference type="PANTHER" id="PTHR45681:SF5">
    <property type="entry name" value="POLYKETIDE SYNTHASE 27-RELATED"/>
    <property type="match status" value="1"/>
</dbReference>
<dbReference type="PANTHER" id="PTHR45681">
    <property type="entry name" value="POLYKETIDE SYNTHASE 44-RELATED"/>
    <property type="match status" value="1"/>
</dbReference>
<dbReference type="Pfam" id="PF23297">
    <property type="entry name" value="ACP_SdgA_C"/>
    <property type="match status" value="1"/>
</dbReference>
<dbReference type="Pfam" id="PF00698">
    <property type="entry name" value="Acyl_transf_1"/>
    <property type="match status" value="1"/>
</dbReference>
<dbReference type="Pfam" id="PF08240">
    <property type="entry name" value="ADH_N"/>
    <property type="match status" value="1"/>
</dbReference>
<dbReference type="Pfam" id="PF13602">
    <property type="entry name" value="ADH_zinc_N_2"/>
    <property type="match status" value="1"/>
</dbReference>
<dbReference type="Pfam" id="PF16197">
    <property type="entry name" value="KAsynt_C_assoc"/>
    <property type="match status" value="1"/>
</dbReference>
<dbReference type="Pfam" id="PF00109">
    <property type="entry name" value="ketoacyl-synt"/>
    <property type="match status" value="1"/>
</dbReference>
<dbReference type="Pfam" id="PF02801">
    <property type="entry name" value="Ketoacyl-synt_C"/>
    <property type="match status" value="1"/>
</dbReference>
<dbReference type="Pfam" id="PF08659">
    <property type="entry name" value="KR"/>
    <property type="match status" value="1"/>
</dbReference>
<dbReference type="Pfam" id="PF08242">
    <property type="entry name" value="Methyltransf_12"/>
    <property type="match status" value="1"/>
</dbReference>
<dbReference type="Pfam" id="PF07993">
    <property type="entry name" value="NAD_binding_4"/>
    <property type="match status" value="1"/>
</dbReference>
<dbReference type="SMART" id="SM00827">
    <property type="entry name" value="PKS_AT"/>
    <property type="match status" value="1"/>
</dbReference>
<dbReference type="SMART" id="SM00829">
    <property type="entry name" value="PKS_ER"/>
    <property type="match status" value="1"/>
</dbReference>
<dbReference type="SMART" id="SM00822">
    <property type="entry name" value="PKS_KR"/>
    <property type="match status" value="1"/>
</dbReference>
<dbReference type="SMART" id="SM00825">
    <property type="entry name" value="PKS_KS"/>
    <property type="match status" value="1"/>
</dbReference>
<dbReference type="SUPFAM" id="SSF47336">
    <property type="entry name" value="ACP-like"/>
    <property type="match status" value="1"/>
</dbReference>
<dbReference type="SUPFAM" id="SSF52151">
    <property type="entry name" value="FabD/lysophospholipase-like"/>
    <property type="match status" value="1"/>
</dbReference>
<dbReference type="SUPFAM" id="SSF50129">
    <property type="entry name" value="GroES-like"/>
    <property type="match status" value="1"/>
</dbReference>
<dbReference type="SUPFAM" id="SSF51735">
    <property type="entry name" value="NAD(P)-binding Rossmann-fold domains"/>
    <property type="match status" value="3"/>
</dbReference>
<dbReference type="SUPFAM" id="SSF55048">
    <property type="entry name" value="Probable ACP-binding domain of malonyl-CoA ACP transacylase"/>
    <property type="match status" value="1"/>
</dbReference>
<dbReference type="SUPFAM" id="SSF53335">
    <property type="entry name" value="S-adenosyl-L-methionine-dependent methyltransferases"/>
    <property type="match status" value="1"/>
</dbReference>
<dbReference type="SUPFAM" id="SSF53901">
    <property type="entry name" value="Thiolase-like"/>
    <property type="match status" value="1"/>
</dbReference>
<dbReference type="PROSITE" id="PS50075">
    <property type="entry name" value="CARRIER"/>
    <property type="match status" value="1"/>
</dbReference>
<dbReference type="PROSITE" id="PS00606">
    <property type="entry name" value="KS3_1"/>
    <property type="match status" value="1"/>
</dbReference>
<dbReference type="PROSITE" id="PS52004">
    <property type="entry name" value="KS3_2"/>
    <property type="match status" value="1"/>
</dbReference>
<dbReference type="PROSITE" id="PS52019">
    <property type="entry name" value="PKS_MFAS_DH"/>
    <property type="match status" value="1"/>
</dbReference>
<proteinExistence type="inferred from homology"/>
<evidence type="ECO:0000250" key="1"/>
<evidence type="ECO:0000255" key="2"/>
<evidence type="ECO:0000255" key="3">
    <source>
        <dbReference type="PROSITE-ProRule" id="PRU00258"/>
    </source>
</evidence>
<evidence type="ECO:0000255" key="4">
    <source>
        <dbReference type="PROSITE-ProRule" id="PRU01348"/>
    </source>
</evidence>
<evidence type="ECO:0000255" key="5">
    <source>
        <dbReference type="PROSITE-ProRule" id="PRU01363"/>
    </source>
</evidence>
<evidence type="ECO:0000255" key="6">
    <source>
        <dbReference type="PROSITE-ProRule" id="PRU10022"/>
    </source>
</evidence>
<evidence type="ECO:0000256" key="7">
    <source>
        <dbReference type="SAM" id="MobiDB-lite"/>
    </source>
</evidence>
<organism>
    <name type="scientific">Dictyostelium discoideum</name>
    <name type="common">Social amoeba</name>
    <dbReference type="NCBI Taxonomy" id="44689"/>
    <lineage>
        <taxon>Eukaryota</taxon>
        <taxon>Amoebozoa</taxon>
        <taxon>Evosea</taxon>
        <taxon>Eumycetozoa</taxon>
        <taxon>Dictyostelia</taxon>
        <taxon>Dictyosteliales</taxon>
        <taxon>Dictyosteliaceae</taxon>
        <taxon>Dictyostelium</taxon>
    </lineage>
</organism>
<accession>Q54FQ3</accession>
<feature type="chain" id="PRO_0000371389" description="Probable polyketide synthase 29">
    <location>
        <begin position="1"/>
        <end position="3106"/>
    </location>
</feature>
<feature type="domain" description="Ketosynthase family 3 (KS3)" evidence="4">
    <location>
        <begin position="28"/>
        <end position="461"/>
    </location>
</feature>
<feature type="domain" description="PKS/mFAS DH" evidence="5">
    <location>
        <begin position="961"/>
        <end position="1266"/>
    </location>
</feature>
<feature type="domain" description="Carrier" evidence="3">
    <location>
        <begin position="2533"/>
        <end position="2610"/>
    </location>
</feature>
<feature type="region of interest" description="Disordered" evidence="7">
    <location>
        <begin position="1"/>
        <end position="20"/>
    </location>
</feature>
<feature type="region of interest" description="Acyl/malonyl transferase">
    <location>
        <begin position="661"/>
        <end position="694"/>
    </location>
</feature>
<feature type="region of interest" description="N-terminal hotdog fold" evidence="5">
    <location>
        <begin position="961"/>
        <end position="1082"/>
    </location>
</feature>
<feature type="region of interest" description="C-terminal hotdog fold" evidence="5">
    <location>
        <begin position="1099"/>
        <end position="1266"/>
    </location>
</feature>
<feature type="region of interest" description="Disordered" evidence="7">
    <location>
        <begin position="2614"/>
        <end position="2656"/>
    </location>
</feature>
<feature type="coiled-coil region" evidence="2">
    <location>
        <begin position="2609"/>
        <end position="2656"/>
    </location>
</feature>
<feature type="compositionally biased region" description="Polar residues" evidence="7">
    <location>
        <begin position="1"/>
        <end position="11"/>
    </location>
</feature>
<feature type="active site" description="For beta-ketoacyl synthase activity" evidence="4">
    <location>
        <position position="200"/>
    </location>
</feature>
<feature type="active site" description="For beta-ketoacyl synthase activity" evidence="4">
    <location>
        <position position="339"/>
    </location>
</feature>
<feature type="active site" description="For beta-ketoacyl synthase activity" evidence="4">
    <location>
        <position position="384"/>
    </location>
</feature>
<feature type="active site" description="For acyl/malonyl transferase activity" evidence="6">
    <location>
        <position position="671"/>
    </location>
</feature>
<feature type="active site" description="Proton acceptor; for dehydratase activity" evidence="5">
    <location>
        <position position="994"/>
    </location>
</feature>
<feature type="active site" description="Proton donor; for dehydratase activity" evidence="5">
    <location>
        <position position="1171"/>
    </location>
</feature>
<feature type="modified residue" description="O-(pantetheine 4'-phosphoryl)serine" evidence="3">
    <location>
        <position position="2570"/>
    </location>
</feature>
<comment type="function">
    <text evidence="1">Probable polyketide synthase.</text>
</comment>
<comment type="cofactor">
    <cofactor evidence="1">
        <name>pantetheine 4'-phosphate</name>
        <dbReference type="ChEBI" id="CHEBI:47942"/>
    </cofactor>
    <text evidence="1">Binds 1 phosphopantetheine covalently.</text>
</comment>
<comment type="domain">
    <text evidence="1">Modular protein that is responsible for the completion of one condensation-processing cycle. The beta-ketoacyl synthase region is responsible for the actual condensation reaction while the acyl/malonyl transferase region is responsible for incorporating carboxylic acids units onto an acyl carrier protein (ACP) domain (By similarity).</text>
</comment>
<comment type="miscellaneous">
    <text>Encoded by one of the numerous copies of polyketide synthase genes and clustered as a quartet pks29/pks30/pks31/pks32 in chromosome 5.</text>
</comment>
<keyword id="KW-0175">Coiled coil</keyword>
<keyword id="KW-0596">Phosphopantetheine</keyword>
<keyword id="KW-0597">Phosphoprotein</keyword>
<keyword id="KW-1185">Reference proteome</keyword>
<keyword id="KW-0808">Transferase</keyword>
<gene>
    <name type="primary">pks29</name>
    <name type="ORF">DDB_G0290699</name>
</gene>
<reference key="1">
    <citation type="journal article" date="2005" name="Nature">
        <title>The genome of the social amoeba Dictyostelium discoideum.</title>
        <authorList>
            <person name="Eichinger L."/>
            <person name="Pachebat J.A."/>
            <person name="Gloeckner G."/>
            <person name="Rajandream M.A."/>
            <person name="Sucgang R."/>
            <person name="Berriman M."/>
            <person name="Song J."/>
            <person name="Olsen R."/>
            <person name="Szafranski K."/>
            <person name="Xu Q."/>
            <person name="Tunggal B."/>
            <person name="Kummerfeld S."/>
            <person name="Madera M."/>
            <person name="Konfortov B.A."/>
            <person name="Rivero F."/>
            <person name="Bankier A.T."/>
            <person name="Lehmann R."/>
            <person name="Hamlin N."/>
            <person name="Davies R."/>
            <person name="Gaudet P."/>
            <person name="Fey P."/>
            <person name="Pilcher K."/>
            <person name="Chen G."/>
            <person name="Saunders D."/>
            <person name="Sodergren E.J."/>
            <person name="Davis P."/>
            <person name="Kerhornou A."/>
            <person name="Nie X."/>
            <person name="Hall N."/>
            <person name="Anjard C."/>
            <person name="Hemphill L."/>
            <person name="Bason N."/>
            <person name="Farbrother P."/>
            <person name="Desany B."/>
            <person name="Just E."/>
            <person name="Morio T."/>
            <person name="Rost R."/>
            <person name="Churcher C.M."/>
            <person name="Cooper J."/>
            <person name="Haydock S."/>
            <person name="van Driessche N."/>
            <person name="Cronin A."/>
            <person name="Goodhead I."/>
            <person name="Muzny D.M."/>
            <person name="Mourier T."/>
            <person name="Pain A."/>
            <person name="Lu M."/>
            <person name="Harper D."/>
            <person name="Lindsay R."/>
            <person name="Hauser H."/>
            <person name="James K.D."/>
            <person name="Quiles M."/>
            <person name="Madan Babu M."/>
            <person name="Saito T."/>
            <person name="Buchrieser C."/>
            <person name="Wardroper A."/>
            <person name="Felder M."/>
            <person name="Thangavelu M."/>
            <person name="Johnson D."/>
            <person name="Knights A."/>
            <person name="Loulseged H."/>
            <person name="Mungall K.L."/>
            <person name="Oliver K."/>
            <person name="Price C."/>
            <person name="Quail M.A."/>
            <person name="Urushihara H."/>
            <person name="Hernandez J."/>
            <person name="Rabbinowitsch E."/>
            <person name="Steffen D."/>
            <person name="Sanders M."/>
            <person name="Ma J."/>
            <person name="Kohara Y."/>
            <person name="Sharp S."/>
            <person name="Simmonds M.N."/>
            <person name="Spiegler S."/>
            <person name="Tivey A."/>
            <person name="Sugano S."/>
            <person name="White B."/>
            <person name="Walker D."/>
            <person name="Woodward J.R."/>
            <person name="Winckler T."/>
            <person name="Tanaka Y."/>
            <person name="Shaulsky G."/>
            <person name="Schleicher M."/>
            <person name="Weinstock G.M."/>
            <person name="Rosenthal A."/>
            <person name="Cox E.C."/>
            <person name="Chisholm R.L."/>
            <person name="Gibbs R.A."/>
            <person name="Loomis W.F."/>
            <person name="Platzer M."/>
            <person name="Kay R.R."/>
            <person name="Williams J.G."/>
            <person name="Dear P.H."/>
            <person name="Noegel A.A."/>
            <person name="Barrell B.G."/>
            <person name="Kuspa A."/>
        </authorList>
    </citation>
    <scope>NUCLEOTIDE SEQUENCE [LARGE SCALE GENOMIC DNA]</scope>
    <source>
        <strain>AX4</strain>
    </source>
</reference>
<reference key="2">
    <citation type="journal article" date="2007" name="Bioinformatics">
        <title>Polyketide synthase genes and the natural products potential of Dictyostelium discoideum.</title>
        <authorList>
            <person name="Zucko J."/>
            <person name="Skunca N."/>
            <person name="Curk T."/>
            <person name="Zupan B."/>
            <person name="Long P.F."/>
            <person name="Cullum J."/>
            <person name="Kessin R.H."/>
            <person name="Hranueli D."/>
        </authorList>
    </citation>
    <scope>IDENTIFICATION</scope>
</reference>
<name>PKS29_DICDI</name>
<protein>
    <recommendedName>
        <fullName>Probable polyketide synthase 29</fullName>
        <shortName>dipks29</shortName>
        <ecNumber>2.3.1.-</ecNumber>
    </recommendedName>
</protein>
<sequence length="3106" mass="353444">MVQNTDNTRNSKLIRDRNDYDDNDDVDSGDIAVIGIGLRFPSGNLKESISKPNQLFNELLNGLDGIVTTSERWSDNYYLNGEIVSKFAGLLPLDEWKQFDPIFFAINPSNDNVSSIDPQQRLLLKCVWEALEDSGIDPISLRGTNTSTFIGSSTIDYSILQRSPFETQNNIFGSTTHSVANRIGYCFDFRGENLTIDTACSSSSNAINCGYNSIKSNKSNVSIVGGVNFLLDPHLSKSFTQLGLLSPTGRCHTFSSDADGYVRSEGVGIVVLKKLKDAIKDSNNIYCVIKGSSSNIDGNFDKLNFYSPSKSSQCENIKLAIKSTNGQINESDIDYCETHGTGTPTGDPIELEGISRVFNNIASTTTNNNNKQVLVGSIKSNIGHTEACSGVASLIKCCLMFKNKLFLQNINFKEPNPLINFKEWGLKVVTEPIKFNENKPTVMLINNFGITGSNVCLILSEFENNHNDYHKMEIDNKLSEEKKKYLIPLSSNSSTSLNNYKSSIIKHSNSSTTTTTTSFKEFVYNQIKFKSTSLIQKSVIIASDWNEFQDENNQIKLNNSDNLISNITVEKKKSPITVMVLCGQGSQYNKMALSLYDNEPIFRESVNRFDKELFKYYGYSVLDKLRSIDDKDLISIHQPILAQPANVMIQVSLYELYKHWGVSADIIIGHSLGEVSSPYCSGMIDFQTLCYLTYHRSVAQNRTTGTGRMLSVNISSDEFINKYQSTTKYKSLEIACYNSPTSIVIAGKEDLLNEITKEFKSNDIFCSMLGSLSSFHTSSQQMIKDEVCSLNISSKQPSIAVFSTVTTNLFNHQSSPFNANYVFDNIIQPVYFTQTITNLYKHIESNDMGNEITFIEVSPHPTLQYYLNQMKSTQSSYFNNGKNITIYSPLNKKKNDYNEFLKTISLLYVKNNFDINFKSQLINNNNNNYSNQLNNLPLYQWDDKEYFKLNSLLEKIKSEGPSIHGLGNNTDSPNPSYQTFIDIKKSPFQWLKGHQVSDKFYYPGMGYVHNLLSIYPNQDITISSLEFKSPLVLTEGNRQCLQTTIAPLSKNEFNIKSYYKDQKTNQWILTSLGNFSLTKHNSIISNKLINIQSLKDKCNFTSISKQDFYETIRIKTNLTYKGLFQGVKQCHIGNNCSLAIVSLNEIYNQKEYNHLINNSNMNTFLNTAILDTCLHGSLVAVTQPVVLDKIEGFKYYSSNIPSLNKNNNNNDDNDDDIKELYVFSDIKPRTNSQTYSISVKIILPNGTLLVDISNVVCALVSLDSNPDSTIICEPPSNNIYTPYLQSKDSVINKPEQFKHLYRVDEFSVKEEDNQFLSNESLLSLFYKHINNRCPSINLESLTTLEYNQFKQLYYNSSANENLFKFIFENLKKYSNIVNLDNDHSNIKSKNEELFIRTTKIMAKQLFPLKDDDSITDTPQSLFESGYLDDFYKNSRVVQPLNSLLSEIIVETLKPILNEPIVFRILEAGGGTGSLSLLILEKICKLLNNNSTTSIINIEFTWSDISASFFAEIKEKFSSFTNRNNLNIIYRVLDLEKPLLDQDLKASYYDFVVMSNVMHVVKKLKPTLNEIHNILTPNGQLLLIEPPHKSFIYDSVFGCFSQWWPSSDSDIELRPDRCCMKQEKWINLLNQCNYRDTIMSGNDNLLFLIQTRKPTINEIISEQSISLDQLNSFNNIILFSNNNNNNNNNNSDNNRNSCSSILDSITLNQELKHKIININNFNEFQSWITNNQTKDDCNKTLIIFLKSIESIMNTSNFKEITFEYIQINQLILKLELSNNFKHLLLSLNSSTDNYLSSSIVGAARYFVEFPQLDLLTLNYDNVSIENNQQLSLINYLINPNNNIQKEFTINNNRVYYERYCRRSNNIKSKLQSKSFENNKDNLCIQLNSNLEYQLYSKKDKLNSNEVEIEIKATGMNYKDYLMYIGMIGTNLDIKYGKEIENCIGFNNPKIGKDFSGIITRLGSNVKKFKVGDQVCGVGSKTSSSHIIVDYDYIYYKPLNYSHSVSALIPSVYITSLHSLYGIGSLKSNESILIHSAAGGVGISSLDLLKSKQHQGYIFLTVGSKDKEEYLINKYGSLITAIYSSRNKDYVYEIKNKLIELGVVEQHQQGVDLILNTLSSEYMDSNFQCLNLSGRIVDLSIIHLTSNDYMTNNHYKFNMNYGNVYVEDFTSKLIKSYLKKIIKMINSNKLELSVPIIEYSNNQFKDAIEYINQRKHIGKIIVNHNQDEFNRVYNNYQSNNNQIILKHSYDISKLNIGKNILLTGQTGIVLEILKYLVKYSNDSIENIIILSKSKLKWELELLINQSKFKKDNNIKFHFNQIDIEDSNKVNQVLNQLELNENITNIDSIIHFAFMNDIGDVQQVDMNRLNNTHGAKTIGAINLHNQSINRSWNIKQFIMASSVVSILGSDQQCCYVSACSVIDSLSKYRHSIGLPSLAINLGAISSTGFVSRNNAIETMFKSSILKLFSPQLVISSLDLFIQNQHQYPNYCLSDFNFEILPSTLTNQYHSKFDFEINIVKKSNQIKSFTGSNDGDNNNEIIRSTILNKICELLSIDESKINEDLQLTQYGMDSLVIVQLKNFIDNQLGHNIITIQQLQNNKINQSIEIILSAHNNNNKNNNNNNNINNNNKNNNNNNNKNNNNINNNINNNKNNNNNNNLVKKEQQSLDEFIKNEMKLNESIISRPYSIKNILNKSNNSKSIFLTGSTGFLGAYLLTELIKMNNISKIYCLIRNNSKLTNPIDVIINNLKKHQLINMNKESPNQRLTKIINHTGNISNDKLSNIENSEYYKQISEDQLIKIIPMIGDISKDKFGLTEQDYLKLSNECDIIINSAADLNLKSNYEESKTVNVNSVNQIVKLSVSNNSSQKLIVHFSSIAVFINHPFKDGEEFEETNILPNFDTTPIGYIQCKVISEKLLTNAAESRGIPSIIIRPPDIFSNPITGIGHSNDFVSLLLKTSKEIGYYPNIYKSIFTTPVTTIAKTTIDLIFNENSWNQNKSKPISIYSLNGNSIEMKSIYKFLENNYNCKEIDYQEWIELVSKSNGMSSKRYSTFHIHDNQNLMVSNFKINSLFKMSNSTKELLTSIGSYNHQDWEINESIILKNINNNNN</sequence>